<accession>Q59075</accession>
<gene>
    <name type="ordered locus">MJ1681</name>
</gene>
<organism>
    <name type="scientific">Methanocaldococcus jannaschii (strain ATCC 43067 / DSM 2661 / JAL-1 / JCM 10045 / NBRC 100440)</name>
    <name type="common">Methanococcus jannaschii</name>
    <dbReference type="NCBI Taxonomy" id="243232"/>
    <lineage>
        <taxon>Archaea</taxon>
        <taxon>Methanobacteriati</taxon>
        <taxon>Methanobacteriota</taxon>
        <taxon>Methanomada group</taxon>
        <taxon>Methanococci</taxon>
        <taxon>Methanococcales</taxon>
        <taxon>Methanocaldococcaceae</taxon>
        <taxon>Methanocaldococcus</taxon>
    </lineage>
</organism>
<dbReference type="EMBL" id="L77117">
    <property type="protein sequence ID" value="AAB99702.1"/>
    <property type="molecule type" value="Genomic_DNA"/>
</dbReference>
<dbReference type="PIR" id="G64509">
    <property type="entry name" value="G64509"/>
</dbReference>
<dbReference type="RefSeq" id="WP_010871205.1">
    <property type="nucleotide sequence ID" value="NC_000909.1"/>
</dbReference>
<dbReference type="STRING" id="243232.MJ_1681"/>
<dbReference type="PaxDb" id="243232-MJ_1681"/>
<dbReference type="EnsemblBacteria" id="AAB99702">
    <property type="protein sequence ID" value="AAB99702"/>
    <property type="gene ID" value="MJ_1681"/>
</dbReference>
<dbReference type="GeneID" id="1452590"/>
<dbReference type="KEGG" id="mja:MJ_1681"/>
<dbReference type="eggNOG" id="arCOG00621">
    <property type="taxonomic scope" value="Archaea"/>
</dbReference>
<dbReference type="HOGENOM" id="CLU_061500_0_0_2"/>
<dbReference type="InParanoid" id="Q59075"/>
<dbReference type="OrthoDB" id="53379at2157"/>
<dbReference type="PhylomeDB" id="Q59075"/>
<dbReference type="Proteomes" id="UP000000805">
    <property type="component" value="Chromosome"/>
</dbReference>
<dbReference type="GO" id="GO:0051539">
    <property type="term" value="F:4 iron, 4 sulfur cluster binding"/>
    <property type="evidence" value="ECO:0007669"/>
    <property type="project" value="UniProtKB-KW"/>
</dbReference>
<dbReference type="GO" id="GO:0046872">
    <property type="term" value="F:metal ion binding"/>
    <property type="evidence" value="ECO:0007669"/>
    <property type="project" value="UniProtKB-KW"/>
</dbReference>
<dbReference type="Gene3D" id="3.30.70.20">
    <property type="match status" value="1"/>
</dbReference>
<dbReference type="InterPro" id="IPR017896">
    <property type="entry name" value="4Fe4S_Fe-S-bd"/>
</dbReference>
<dbReference type="InterPro" id="IPR050572">
    <property type="entry name" value="Fe-S_Ferredoxin"/>
</dbReference>
<dbReference type="InterPro" id="IPR002708">
    <property type="entry name" value="HcyBio"/>
</dbReference>
<dbReference type="InterPro" id="IPR017677">
    <property type="entry name" value="Methan_mark_16"/>
</dbReference>
<dbReference type="NCBIfam" id="TIGR03287">
    <property type="entry name" value="methan_mark_16"/>
    <property type="match status" value="1"/>
</dbReference>
<dbReference type="PANTHER" id="PTHR43687:SF3">
    <property type="entry name" value="4FE-4S FERREDOXIN-TYPE DOMAIN-CONTAINING PROTEIN"/>
    <property type="match status" value="1"/>
</dbReference>
<dbReference type="PANTHER" id="PTHR43687">
    <property type="entry name" value="ADENYLYLSULFATE REDUCTASE, BETA SUBUNIT"/>
    <property type="match status" value="1"/>
</dbReference>
<dbReference type="Pfam" id="PF01837">
    <property type="entry name" value="HcyBio"/>
    <property type="match status" value="1"/>
</dbReference>
<dbReference type="SUPFAM" id="SSF54862">
    <property type="entry name" value="4Fe-4S ferredoxins"/>
    <property type="match status" value="1"/>
</dbReference>
<dbReference type="PROSITE" id="PS51379">
    <property type="entry name" value="4FE4S_FER_2"/>
    <property type="match status" value="1"/>
</dbReference>
<sequence>MEKELKVITIDELKKYIRNNEEDKIEEVDVVTSATCGIMSGTAGIFHIPFNEVFKRAEEIYLNDIKGVVGICPNEFLGKVDAIFYGEVGFLFKDLVKGKVVEAKAISEGKIYKNEITIDDLPTAKMIGTRMAFKNYTAITNLSDEEVNTIFHRLPLKKGEASFSGCGMLNPLENMVIKDEKDVVGKKALLNGAEAIILGFGTRASIEKPNLMMSADMKDMDAYYLGGFVTSNGIEIYNTIAVPIKVDEHKEALKKLDKDITLPLVNIFGREIIDIGSYAEVWENVDLRPKIYQDKCKNCRECLVEKYCPTFAIKRENGKIKITEDCFGCGVCNICPYGVFKTKLGSVCGIPITCRQSDRKRALKLAKELKKKIERGEFKI</sequence>
<protein>
    <recommendedName>
        <fullName>Uncharacterized protein MJ1681</fullName>
    </recommendedName>
</protein>
<keyword id="KW-0004">4Fe-4S</keyword>
<keyword id="KW-0408">Iron</keyword>
<keyword id="KW-0411">Iron-sulfur</keyword>
<keyword id="KW-0479">Metal-binding</keyword>
<keyword id="KW-1185">Reference proteome</keyword>
<proteinExistence type="predicted"/>
<evidence type="ECO:0000255" key="1">
    <source>
        <dbReference type="PROSITE-ProRule" id="PRU00711"/>
    </source>
</evidence>
<feature type="chain" id="PRO_0000107481" description="Uncharacterized protein MJ1681">
    <location>
        <begin position="1"/>
        <end position="380"/>
    </location>
</feature>
<feature type="domain" description="4Fe-4S ferredoxin-type" evidence="1">
    <location>
        <begin position="287"/>
        <end position="318"/>
    </location>
</feature>
<name>Y1681_METJA</name>
<reference key="1">
    <citation type="journal article" date="1996" name="Science">
        <title>Complete genome sequence of the methanogenic archaeon, Methanococcus jannaschii.</title>
        <authorList>
            <person name="Bult C.J."/>
            <person name="White O."/>
            <person name="Olsen G.J."/>
            <person name="Zhou L."/>
            <person name="Fleischmann R.D."/>
            <person name="Sutton G.G."/>
            <person name="Blake J.A."/>
            <person name="FitzGerald L.M."/>
            <person name="Clayton R.A."/>
            <person name="Gocayne J.D."/>
            <person name="Kerlavage A.R."/>
            <person name="Dougherty B.A."/>
            <person name="Tomb J.-F."/>
            <person name="Adams M.D."/>
            <person name="Reich C.I."/>
            <person name="Overbeek R."/>
            <person name="Kirkness E.F."/>
            <person name="Weinstock K.G."/>
            <person name="Merrick J.M."/>
            <person name="Glodek A."/>
            <person name="Scott J.L."/>
            <person name="Geoghagen N.S.M."/>
            <person name="Weidman J.F."/>
            <person name="Fuhrmann J.L."/>
            <person name="Nguyen D."/>
            <person name="Utterback T.R."/>
            <person name="Kelley J.M."/>
            <person name="Peterson J.D."/>
            <person name="Sadow P.W."/>
            <person name="Hanna M.C."/>
            <person name="Cotton M.D."/>
            <person name="Roberts K.M."/>
            <person name="Hurst M.A."/>
            <person name="Kaine B.P."/>
            <person name="Borodovsky M."/>
            <person name="Klenk H.-P."/>
            <person name="Fraser C.M."/>
            <person name="Smith H.O."/>
            <person name="Woese C.R."/>
            <person name="Venter J.C."/>
        </authorList>
    </citation>
    <scope>NUCLEOTIDE SEQUENCE [LARGE SCALE GENOMIC DNA]</scope>
    <source>
        <strain>ATCC 43067 / DSM 2661 / JAL-1 / JCM 10045 / NBRC 100440</strain>
    </source>
</reference>